<keyword id="KW-0030">Aminoacyl-tRNA synthetase</keyword>
<keyword id="KW-0067">ATP-binding</keyword>
<keyword id="KW-0963">Cytoplasm</keyword>
<keyword id="KW-0436">Ligase</keyword>
<keyword id="KW-0460">Magnesium</keyword>
<keyword id="KW-0479">Metal-binding</keyword>
<keyword id="KW-0547">Nucleotide-binding</keyword>
<keyword id="KW-0648">Protein biosynthesis</keyword>
<sequence length="338" mass="37929">MENLDALVSQALEAVQQSEDVNALEQLRVQYLGKKGELTALMQTLGKLSAEERPQAGALINTAKNQVQDALNARKSVLEQALLAEKLASERIDVTLPGRGQTSGGLHPVTRTLERVEQFFTHIGYSVAEGPEVEDDYHNFEALNIPGHHPARAMHDTFYFNANMLLRTHTSPVQVRTMESQQPPIRIVCPGRVYRCDSDITHSPMFHQVEGLLVDEGISFADLKGTIEEFLRVFFEKPLGVRFRPSFFPFTEPSAEVDMQCVMCSGKGCRVCKQTGWLEVMGCGMVHPNVLRMSGIDPEKYSGFAFGMGVERLAMLRYGVNDLRLFFDNDLRFLAQFR</sequence>
<gene>
    <name evidence="1" type="primary">pheS</name>
    <name type="ordered locus">Pmen_1980</name>
</gene>
<protein>
    <recommendedName>
        <fullName evidence="1">Phenylalanine--tRNA ligase alpha subunit</fullName>
        <ecNumber evidence="1">6.1.1.20</ecNumber>
    </recommendedName>
    <alternativeName>
        <fullName evidence="1">Phenylalanyl-tRNA synthetase alpha subunit</fullName>
        <shortName evidence="1">PheRS</shortName>
    </alternativeName>
</protein>
<reference key="1">
    <citation type="submission" date="2007-04" db="EMBL/GenBank/DDBJ databases">
        <title>Complete sequence of Pseudomonas mendocina ymp.</title>
        <authorList>
            <consortium name="US DOE Joint Genome Institute"/>
            <person name="Copeland A."/>
            <person name="Lucas S."/>
            <person name="Lapidus A."/>
            <person name="Barry K."/>
            <person name="Glavina del Rio T."/>
            <person name="Dalin E."/>
            <person name="Tice H."/>
            <person name="Pitluck S."/>
            <person name="Kiss H."/>
            <person name="Brettin T."/>
            <person name="Detter J.C."/>
            <person name="Bruce D."/>
            <person name="Han C."/>
            <person name="Schmutz J."/>
            <person name="Larimer F."/>
            <person name="Land M."/>
            <person name="Hauser L."/>
            <person name="Kyrpides N."/>
            <person name="Mikhailova N."/>
            <person name="Hersman L."/>
            <person name="Dubois J."/>
            <person name="Maurice P."/>
            <person name="Richardson P."/>
        </authorList>
    </citation>
    <scope>NUCLEOTIDE SEQUENCE [LARGE SCALE GENOMIC DNA]</scope>
    <source>
        <strain>ymp</strain>
    </source>
</reference>
<organism>
    <name type="scientific">Ectopseudomonas mendocina (strain ymp)</name>
    <name type="common">Pseudomonas mendocina</name>
    <dbReference type="NCBI Taxonomy" id="399739"/>
    <lineage>
        <taxon>Bacteria</taxon>
        <taxon>Pseudomonadati</taxon>
        <taxon>Pseudomonadota</taxon>
        <taxon>Gammaproteobacteria</taxon>
        <taxon>Pseudomonadales</taxon>
        <taxon>Pseudomonadaceae</taxon>
        <taxon>Ectopseudomonas</taxon>
    </lineage>
</organism>
<evidence type="ECO:0000255" key="1">
    <source>
        <dbReference type="HAMAP-Rule" id="MF_00281"/>
    </source>
</evidence>
<feature type="chain" id="PRO_1000006876" description="Phenylalanine--tRNA ligase alpha subunit">
    <location>
        <begin position="1"/>
        <end position="338"/>
    </location>
</feature>
<feature type="binding site" evidence="1">
    <location>
        <position position="252"/>
    </location>
    <ligand>
        <name>Mg(2+)</name>
        <dbReference type="ChEBI" id="CHEBI:18420"/>
        <note>shared with beta subunit</note>
    </ligand>
</feature>
<accession>A4XTS5</accession>
<comment type="catalytic activity">
    <reaction evidence="1">
        <text>tRNA(Phe) + L-phenylalanine + ATP = L-phenylalanyl-tRNA(Phe) + AMP + diphosphate + H(+)</text>
        <dbReference type="Rhea" id="RHEA:19413"/>
        <dbReference type="Rhea" id="RHEA-COMP:9668"/>
        <dbReference type="Rhea" id="RHEA-COMP:9699"/>
        <dbReference type="ChEBI" id="CHEBI:15378"/>
        <dbReference type="ChEBI" id="CHEBI:30616"/>
        <dbReference type="ChEBI" id="CHEBI:33019"/>
        <dbReference type="ChEBI" id="CHEBI:58095"/>
        <dbReference type="ChEBI" id="CHEBI:78442"/>
        <dbReference type="ChEBI" id="CHEBI:78531"/>
        <dbReference type="ChEBI" id="CHEBI:456215"/>
        <dbReference type="EC" id="6.1.1.20"/>
    </reaction>
</comment>
<comment type="cofactor">
    <cofactor evidence="1">
        <name>Mg(2+)</name>
        <dbReference type="ChEBI" id="CHEBI:18420"/>
    </cofactor>
    <text evidence="1">Binds 2 magnesium ions per tetramer.</text>
</comment>
<comment type="subunit">
    <text evidence="1">Tetramer of two alpha and two beta subunits.</text>
</comment>
<comment type="subcellular location">
    <subcellularLocation>
        <location evidence="1">Cytoplasm</location>
    </subcellularLocation>
</comment>
<comment type="similarity">
    <text evidence="1">Belongs to the class-II aminoacyl-tRNA synthetase family. Phe-tRNA synthetase alpha subunit type 1 subfamily.</text>
</comment>
<proteinExistence type="inferred from homology"/>
<name>SYFA_ECTM1</name>
<dbReference type="EC" id="6.1.1.20" evidence="1"/>
<dbReference type="EMBL" id="CP000680">
    <property type="protein sequence ID" value="ABP84741.1"/>
    <property type="molecule type" value="Genomic_DNA"/>
</dbReference>
<dbReference type="SMR" id="A4XTS5"/>
<dbReference type="STRING" id="399739.Pmen_1980"/>
<dbReference type="KEGG" id="pmy:Pmen_1980"/>
<dbReference type="PATRIC" id="fig|399739.8.peg.2006"/>
<dbReference type="eggNOG" id="COG0016">
    <property type="taxonomic scope" value="Bacteria"/>
</dbReference>
<dbReference type="HOGENOM" id="CLU_025086_0_1_6"/>
<dbReference type="OrthoDB" id="9800719at2"/>
<dbReference type="GO" id="GO:0005737">
    <property type="term" value="C:cytoplasm"/>
    <property type="evidence" value="ECO:0007669"/>
    <property type="project" value="UniProtKB-SubCell"/>
</dbReference>
<dbReference type="GO" id="GO:0005524">
    <property type="term" value="F:ATP binding"/>
    <property type="evidence" value="ECO:0007669"/>
    <property type="project" value="UniProtKB-UniRule"/>
</dbReference>
<dbReference type="GO" id="GO:0000287">
    <property type="term" value="F:magnesium ion binding"/>
    <property type="evidence" value="ECO:0007669"/>
    <property type="project" value="UniProtKB-UniRule"/>
</dbReference>
<dbReference type="GO" id="GO:0004826">
    <property type="term" value="F:phenylalanine-tRNA ligase activity"/>
    <property type="evidence" value="ECO:0007669"/>
    <property type="project" value="UniProtKB-UniRule"/>
</dbReference>
<dbReference type="GO" id="GO:0000049">
    <property type="term" value="F:tRNA binding"/>
    <property type="evidence" value="ECO:0007669"/>
    <property type="project" value="InterPro"/>
</dbReference>
<dbReference type="GO" id="GO:0006432">
    <property type="term" value="P:phenylalanyl-tRNA aminoacylation"/>
    <property type="evidence" value="ECO:0007669"/>
    <property type="project" value="UniProtKB-UniRule"/>
</dbReference>
<dbReference type="CDD" id="cd00496">
    <property type="entry name" value="PheRS_alpha_core"/>
    <property type="match status" value="1"/>
</dbReference>
<dbReference type="FunFam" id="3.30.930.10:FF:000003">
    <property type="entry name" value="Phenylalanine--tRNA ligase alpha subunit"/>
    <property type="match status" value="1"/>
</dbReference>
<dbReference type="Gene3D" id="3.30.930.10">
    <property type="entry name" value="Bira Bifunctional Protein, Domain 2"/>
    <property type="match status" value="1"/>
</dbReference>
<dbReference type="HAMAP" id="MF_00281">
    <property type="entry name" value="Phe_tRNA_synth_alpha1"/>
    <property type="match status" value="1"/>
</dbReference>
<dbReference type="InterPro" id="IPR006195">
    <property type="entry name" value="aa-tRNA-synth_II"/>
</dbReference>
<dbReference type="InterPro" id="IPR045864">
    <property type="entry name" value="aa-tRNA-synth_II/BPL/LPL"/>
</dbReference>
<dbReference type="InterPro" id="IPR004529">
    <property type="entry name" value="Phe-tRNA-synth_IIc_asu"/>
</dbReference>
<dbReference type="InterPro" id="IPR004188">
    <property type="entry name" value="Phe-tRNA_ligase_II_N"/>
</dbReference>
<dbReference type="InterPro" id="IPR022911">
    <property type="entry name" value="Phe_tRNA_ligase_alpha1_bac"/>
</dbReference>
<dbReference type="InterPro" id="IPR002319">
    <property type="entry name" value="Phenylalanyl-tRNA_Synthase"/>
</dbReference>
<dbReference type="InterPro" id="IPR010978">
    <property type="entry name" value="tRNA-bd_arm"/>
</dbReference>
<dbReference type="NCBIfam" id="TIGR00468">
    <property type="entry name" value="pheS"/>
    <property type="match status" value="1"/>
</dbReference>
<dbReference type="PANTHER" id="PTHR11538:SF41">
    <property type="entry name" value="PHENYLALANINE--TRNA LIGASE, MITOCHONDRIAL"/>
    <property type="match status" value="1"/>
</dbReference>
<dbReference type="PANTHER" id="PTHR11538">
    <property type="entry name" value="PHENYLALANYL-TRNA SYNTHETASE"/>
    <property type="match status" value="1"/>
</dbReference>
<dbReference type="Pfam" id="PF02912">
    <property type="entry name" value="Phe_tRNA-synt_N"/>
    <property type="match status" value="1"/>
</dbReference>
<dbReference type="Pfam" id="PF01409">
    <property type="entry name" value="tRNA-synt_2d"/>
    <property type="match status" value="1"/>
</dbReference>
<dbReference type="SUPFAM" id="SSF55681">
    <property type="entry name" value="Class II aaRS and biotin synthetases"/>
    <property type="match status" value="1"/>
</dbReference>
<dbReference type="SUPFAM" id="SSF46589">
    <property type="entry name" value="tRNA-binding arm"/>
    <property type="match status" value="1"/>
</dbReference>
<dbReference type="PROSITE" id="PS50862">
    <property type="entry name" value="AA_TRNA_LIGASE_II"/>
    <property type="match status" value="1"/>
</dbReference>